<evidence type="ECO:0000250" key="1"/>
<evidence type="ECO:0000256" key="2">
    <source>
        <dbReference type="SAM" id="MobiDB-lite"/>
    </source>
</evidence>
<evidence type="ECO:0007744" key="3">
    <source>
    </source>
</evidence>
<comment type="function">
    <text evidence="1">Substrate-recognition component of the SCF (SKP1-CUL1-F-box protein)-type E3 ubiquitin ligase complex.</text>
</comment>
<comment type="subunit">
    <text evidence="1">Interacts with SKP1 and CUL1.</text>
</comment>
<reference key="1">
    <citation type="journal article" date="2004" name="Genome Res.">
        <title>The status, quality, and expansion of the NIH full-length cDNA project: the Mammalian Gene Collection (MGC).</title>
        <authorList>
            <consortium name="The MGC Project Team"/>
        </authorList>
    </citation>
    <scope>NUCLEOTIDE SEQUENCE [LARGE SCALE MRNA]</scope>
    <source>
        <tissue>Brain</tissue>
    </source>
</reference>
<reference key="2">
    <citation type="journal article" date="2010" name="Cell">
        <title>A tissue-specific atlas of mouse protein phosphorylation and expression.</title>
        <authorList>
            <person name="Huttlin E.L."/>
            <person name="Jedrychowski M.P."/>
            <person name="Elias J.E."/>
            <person name="Goswami T."/>
            <person name="Rad R."/>
            <person name="Beausoleil S.A."/>
            <person name="Villen J."/>
            <person name="Haas W."/>
            <person name="Sowa M.E."/>
            <person name="Gygi S.P."/>
        </authorList>
    </citation>
    <scope>IDENTIFICATION BY MASS SPECTROMETRY [LARGE SCALE ANALYSIS]</scope>
    <source>
        <tissue>Brain</tissue>
    </source>
</reference>
<reference key="3">
    <citation type="journal article" date="2014" name="Mol. Cell. Proteomics">
        <title>Immunoaffinity enrichment and mass spectrometry analysis of protein methylation.</title>
        <authorList>
            <person name="Guo A."/>
            <person name="Gu H."/>
            <person name="Zhou J."/>
            <person name="Mulhern D."/>
            <person name="Wang Y."/>
            <person name="Lee K.A."/>
            <person name="Yang V."/>
            <person name="Aguiar M."/>
            <person name="Kornhauser J."/>
            <person name="Jia X."/>
            <person name="Ren J."/>
            <person name="Beausoleil S.A."/>
            <person name="Silva J.C."/>
            <person name="Vemulapalli V."/>
            <person name="Bedford M.T."/>
            <person name="Comb M.J."/>
        </authorList>
    </citation>
    <scope>METHYLATION [LARGE SCALE ANALYSIS] AT ARG-92</scope>
    <scope>IDENTIFICATION BY MASS SPECTROMETRY [LARGE SCALE ANALYSIS]</scope>
    <source>
        <tissue>Embryo</tissue>
    </source>
</reference>
<protein>
    <recommendedName>
        <fullName>F-box/LRR-repeat protein 16</fullName>
    </recommendedName>
    <alternativeName>
        <fullName>F-box and leucine-rich repeat protein 16</fullName>
    </alternativeName>
</protein>
<dbReference type="EMBL" id="BC132383">
    <property type="protein sequence ID" value="AAI32384.1"/>
    <property type="molecule type" value="mRNA"/>
</dbReference>
<dbReference type="CCDS" id="CCDS50036.1"/>
<dbReference type="RefSeq" id="NP_001157697.1">
    <property type="nucleotide sequence ID" value="NM_001164225.2"/>
</dbReference>
<dbReference type="RefSeq" id="NP_001366322.1">
    <property type="nucleotide sequence ID" value="NM_001379393.1"/>
</dbReference>
<dbReference type="RefSeq" id="XP_006524083.1">
    <property type="nucleotide sequence ID" value="XM_006524020.3"/>
</dbReference>
<dbReference type="SMR" id="A2RT62"/>
<dbReference type="BioGRID" id="229576">
    <property type="interactions" value="26"/>
</dbReference>
<dbReference type="FunCoup" id="A2RT62">
    <property type="interactions" value="462"/>
</dbReference>
<dbReference type="STRING" id="10090.ENSMUSP00000048562"/>
<dbReference type="GlyGen" id="A2RT62">
    <property type="glycosylation" value="2 sites, 1 O-linked glycan (1 site)"/>
</dbReference>
<dbReference type="iPTMnet" id="A2RT62"/>
<dbReference type="PhosphoSitePlus" id="A2RT62"/>
<dbReference type="SwissPalm" id="A2RT62"/>
<dbReference type="jPOST" id="A2RT62"/>
<dbReference type="PaxDb" id="10090-ENSMUSP00000048562"/>
<dbReference type="PeptideAtlas" id="A2RT62"/>
<dbReference type="ProteomicsDB" id="271654"/>
<dbReference type="Pumba" id="A2RT62"/>
<dbReference type="Antibodypedia" id="22839">
    <property type="antibodies" value="126 antibodies from 26 providers"/>
</dbReference>
<dbReference type="DNASU" id="214931"/>
<dbReference type="Ensembl" id="ENSMUST00000045692.9">
    <property type="protein sequence ID" value="ENSMUSP00000048562.8"/>
    <property type="gene ID" value="ENSMUSG00000025738.9"/>
</dbReference>
<dbReference type="Ensembl" id="ENSMUST00000236165.2">
    <property type="protein sequence ID" value="ENSMUSP00000157536.2"/>
    <property type="gene ID" value="ENSMUSG00000025738.9"/>
</dbReference>
<dbReference type="GeneID" id="214931"/>
<dbReference type="KEGG" id="mmu:214931"/>
<dbReference type="UCSC" id="uc008bcc.2">
    <property type="organism name" value="mouse"/>
</dbReference>
<dbReference type="AGR" id="MGI:2448488"/>
<dbReference type="CTD" id="146330"/>
<dbReference type="MGI" id="MGI:2448488">
    <property type="gene designation" value="Fbxl16"/>
</dbReference>
<dbReference type="VEuPathDB" id="HostDB:ENSMUSG00000025738"/>
<dbReference type="eggNOG" id="KOG1947">
    <property type="taxonomic scope" value="Eukaryota"/>
</dbReference>
<dbReference type="GeneTree" id="ENSGT00940000159138"/>
<dbReference type="HOGENOM" id="CLU_027026_1_0_1"/>
<dbReference type="InParanoid" id="A2RT62"/>
<dbReference type="OMA" id="FWAGLMP"/>
<dbReference type="OrthoDB" id="10044893at2759"/>
<dbReference type="PhylomeDB" id="A2RT62"/>
<dbReference type="TreeFam" id="TF324260"/>
<dbReference type="Reactome" id="R-MMU-8951664">
    <property type="pathway name" value="Neddylation"/>
</dbReference>
<dbReference type="Reactome" id="R-MMU-983168">
    <property type="pathway name" value="Antigen processing: Ubiquitination &amp; Proteasome degradation"/>
</dbReference>
<dbReference type="BioGRID-ORCS" id="214931">
    <property type="hits" value="5 hits in 77 CRISPR screens"/>
</dbReference>
<dbReference type="PRO" id="PR:A2RT62"/>
<dbReference type="Proteomes" id="UP000000589">
    <property type="component" value="Chromosome 17"/>
</dbReference>
<dbReference type="RNAct" id="A2RT62">
    <property type="molecule type" value="protein"/>
</dbReference>
<dbReference type="Bgee" id="ENSMUSG00000025738">
    <property type="expression patterns" value="Expressed in dorsal striatum and 210 other cell types or tissues"/>
</dbReference>
<dbReference type="ExpressionAtlas" id="A2RT62">
    <property type="expression patterns" value="baseline and differential"/>
</dbReference>
<dbReference type="GO" id="GO:0005737">
    <property type="term" value="C:cytoplasm"/>
    <property type="evidence" value="ECO:0000266"/>
    <property type="project" value="MGI"/>
</dbReference>
<dbReference type="CDD" id="cd22127">
    <property type="entry name" value="F-box_FBXL16"/>
    <property type="match status" value="1"/>
</dbReference>
<dbReference type="FunFam" id="3.80.10.10:FF:000262">
    <property type="entry name" value="F-box/LRR-repeat protein 16"/>
    <property type="match status" value="1"/>
</dbReference>
<dbReference type="FunFam" id="3.80.10.10:FF:000733">
    <property type="entry name" value="F-box/LRR-repeat protein 16"/>
    <property type="match status" value="1"/>
</dbReference>
<dbReference type="Gene3D" id="3.80.10.10">
    <property type="entry name" value="Ribonuclease Inhibitor"/>
    <property type="match status" value="2"/>
</dbReference>
<dbReference type="InterPro" id="IPR036047">
    <property type="entry name" value="F-box-like_dom_sf"/>
</dbReference>
<dbReference type="InterPro" id="IPR050648">
    <property type="entry name" value="F-box_LRR-repeat"/>
</dbReference>
<dbReference type="InterPro" id="IPR001611">
    <property type="entry name" value="Leu-rich_rpt"/>
</dbReference>
<dbReference type="InterPro" id="IPR006553">
    <property type="entry name" value="Leu-rich_rpt_Cys-con_subtyp"/>
</dbReference>
<dbReference type="InterPro" id="IPR032675">
    <property type="entry name" value="LRR_dom_sf"/>
</dbReference>
<dbReference type="PANTHER" id="PTHR13382">
    <property type="entry name" value="MITOCHONDRIAL ATP SYNTHASE COUPLING FACTOR B"/>
    <property type="match status" value="1"/>
</dbReference>
<dbReference type="Pfam" id="PF13516">
    <property type="entry name" value="LRR_6"/>
    <property type="match status" value="2"/>
</dbReference>
<dbReference type="SMART" id="SM00367">
    <property type="entry name" value="LRR_CC"/>
    <property type="match status" value="7"/>
</dbReference>
<dbReference type="SUPFAM" id="SSF81383">
    <property type="entry name" value="F-box domain"/>
    <property type="match status" value="1"/>
</dbReference>
<dbReference type="SUPFAM" id="SSF52047">
    <property type="entry name" value="RNI-like"/>
    <property type="match status" value="1"/>
</dbReference>
<gene>
    <name type="primary">Fbxl16</name>
</gene>
<name>FXL16_MOUSE</name>
<accession>A2RT62</accession>
<sequence length="479" mass="51878">MSSPGIDGDPKPPCLPRNGLVKLPGQPNGLGAASITKGTPAAKNRPCQPPPPPTLPPPSLATPLSRVALAGGPCPPASGPASGPVSGPPVERPPLATDEKILNGLFWYFSACEKCILAQVCKAWRRVLYQPKFWAGLTPVLHAKELYNVLPGGEKEFVNLQGFAARGFEGFCLVGVSDLDICEFIDNYSLSKKGVKAMSLKRSTITDAGLEVMLEQMQGVVRLELSGCNDFTEAGLWSSLSARITSLSVSDCINVADDAIAAISQLLPNLAELSLQAYHVTDTALAYFTARQGHSTHTLRLLSCWEITNHGVVNVVHSLPNLTSLSLSGCSKVTDDGVELVAENLRKLRSLDLSWCPRITDMALEYVACDLHRLEELVLDRCVRITDTGLSYLSTMSSLRSLYLRWCCQVQDFGLKHLLAMRNLRLLSLAGCPLLTTTGLSGLVQLQELEELELTNCPGATPELFKYFSQHLPRCLVIE</sequence>
<keyword id="KW-0433">Leucine-rich repeat</keyword>
<keyword id="KW-0488">Methylation</keyword>
<keyword id="KW-1185">Reference proteome</keyword>
<keyword id="KW-0677">Repeat</keyword>
<keyword id="KW-0833">Ubl conjugation pathway</keyword>
<proteinExistence type="evidence at protein level"/>
<feature type="chain" id="PRO_0000307721" description="F-box/LRR-repeat protein 16">
    <location>
        <begin position="1"/>
        <end position="479"/>
    </location>
</feature>
<feature type="domain" description="F-box">
    <location>
        <begin position="94"/>
        <end position="139"/>
    </location>
</feature>
<feature type="repeat" description="LRR 1">
    <location>
        <begin position="321"/>
        <end position="342"/>
    </location>
</feature>
<feature type="repeat" description="LRR 2">
    <location>
        <begin position="347"/>
        <end position="369"/>
    </location>
</feature>
<feature type="repeat" description="LRR 3">
    <location>
        <begin position="373"/>
        <end position="394"/>
    </location>
</feature>
<feature type="repeat" description="LRR 4">
    <location>
        <begin position="398"/>
        <end position="419"/>
    </location>
</feature>
<feature type="repeat" description="LRR 5">
    <location>
        <begin position="423"/>
        <end position="444"/>
    </location>
</feature>
<feature type="repeat" description="LRR 6">
    <location>
        <begin position="446"/>
        <end position="470"/>
    </location>
</feature>
<feature type="region of interest" description="Disordered" evidence="2">
    <location>
        <begin position="1"/>
        <end position="92"/>
    </location>
</feature>
<feature type="compositionally biased region" description="Pro residues" evidence="2">
    <location>
        <begin position="47"/>
        <end position="60"/>
    </location>
</feature>
<feature type="modified residue" description="Omega-N-methylarginine" evidence="3">
    <location>
        <position position="92"/>
    </location>
</feature>
<organism>
    <name type="scientific">Mus musculus</name>
    <name type="common">Mouse</name>
    <dbReference type="NCBI Taxonomy" id="10090"/>
    <lineage>
        <taxon>Eukaryota</taxon>
        <taxon>Metazoa</taxon>
        <taxon>Chordata</taxon>
        <taxon>Craniata</taxon>
        <taxon>Vertebrata</taxon>
        <taxon>Euteleostomi</taxon>
        <taxon>Mammalia</taxon>
        <taxon>Eutheria</taxon>
        <taxon>Euarchontoglires</taxon>
        <taxon>Glires</taxon>
        <taxon>Rodentia</taxon>
        <taxon>Myomorpha</taxon>
        <taxon>Muroidea</taxon>
        <taxon>Muridae</taxon>
        <taxon>Murinae</taxon>
        <taxon>Mus</taxon>
        <taxon>Mus</taxon>
    </lineage>
</organism>